<sequence>MSIPSILRKETLKKKDKNIDLQENNINDLVVSASRVIAPLWPISTFAAHHPWMGLEKQSFEQVANWLKEARNVDIYPSASMIHSAKAKGEIEESFLQIALSRWLDSQSFHMPRETAERFCQEALKLERLPSSLLSSPELNKLAEEINYVNTGSMKDSSMQPISSLIENQNGDNLSDILNYHIIKWCKLYLDDAGASWAMPNREKGFYRAWQHLITFDPSLSKTERKVLKDWPEDALIALTKALSELGISESNMQAYLEGHLLSLPGWAGMIRWRSQQSIEEQELLIEYLAVRLSMELAIVKPYLPLKNQKVEKKVSIVPLIASWIYWGDISIEKWLQMSAAEQSELLAFAYRFDENTRKKLWLEAWEQTHAEQLREKIASKQRATHDKKRVVAQLAFCIDVRSEPFRRHLEKLGPFETFGIAGFFGLPIATTELGSNDSHPSLPVILKPKHQIKELTDENECKSYEQRKMVGSSVRYTFKTMKQNVLTSMLLPEVSGPLLGLQMVTRSFVPRRVGGFIRNLRKNMLQKPDTTFSLNHVHDTNCEIPIGFTKEEKVNYVRQALKMVGLTEGFAPLVVMCGHSSQSTNNPYAAALECGACGGAAGGFNARVFATLCNLPEVREALSAEGIKIPDDTIFAAAEHKTTVDELEWIYVPELSETAQEAFDCIEAIMPNVSQHANRERLMQLPHFKTKIKNPSKEAHRFAEDWSEIRPEWGLARNASFIIGQRELTRDCDLEGRAFLHNYDWKQDESGDILANIIAGPGTVAQWINLQYYASTVAPHYYGSGNKTTQTVTAGLGVMQGNASDLLPGLPWQSVMQSDRETYHSPLRLLIVIQAPTKYIERLLNNNFTFREKVQNKWVRLASVDPEGRWKNW</sequence>
<proteinExistence type="inferred from homology"/>
<organism>
    <name type="scientific">Bacillus thuringiensis subsp. konkukian (strain 97-27)</name>
    <dbReference type="NCBI Taxonomy" id="281309"/>
    <lineage>
        <taxon>Bacteria</taxon>
        <taxon>Bacillati</taxon>
        <taxon>Bacillota</taxon>
        <taxon>Bacilli</taxon>
        <taxon>Bacillales</taxon>
        <taxon>Bacillaceae</taxon>
        <taxon>Bacillus</taxon>
        <taxon>Bacillus cereus group</taxon>
    </lineage>
</organism>
<dbReference type="EMBL" id="AE017355">
    <property type="protein sequence ID" value="AAT61724.1"/>
    <property type="molecule type" value="Genomic_DNA"/>
</dbReference>
<dbReference type="RefSeq" id="WP_000026988.1">
    <property type="nucleotide sequence ID" value="NC_005957.1"/>
</dbReference>
<dbReference type="RefSeq" id="YP_037260.1">
    <property type="nucleotide sequence ID" value="NC_005957.1"/>
</dbReference>
<dbReference type="SMR" id="Q6HGR6"/>
<dbReference type="KEGG" id="btk:BT9727_2937"/>
<dbReference type="PATRIC" id="fig|281309.8.peg.3127"/>
<dbReference type="HOGENOM" id="CLU_009885_0_0_9"/>
<dbReference type="Proteomes" id="UP000001301">
    <property type="component" value="Chromosome"/>
</dbReference>
<dbReference type="GO" id="GO:0005886">
    <property type="term" value="C:plasma membrane"/>
    <property type="evidence" value="ECO:0007669"/>
    <property type="project" value="UniProtKB-SubCell"/>
</dbReference>
<dbReference type="GO" id="GO:0008270">
    <property type="term" value="F:zinc ion binding"/>
    <property type="evidence" value="ECO:0007669"/>
    <property type="project" value="UniProtKB-UniRule"/>
</dbReference>
<dbReference type="HAMAP" id="MF_01871">
    <property type="entry name" value="DabA"/>
    <property type="match status" value="1"/>
</dbReference>
<dbReference type="InterPro" id="IPR018752">
    <property type="entry name" value="DabA"/>
</dbReference>
<dbReference type="PANTHER" id="PTHR38344:SF1">
    <property type="entry name" value="INORGANIC CARBON TRANSPORTER SUBUNIT DABA-RELATED"/>
    <property type="match status" value="1"/>
</dbReference>
<dbReference type="PANTHER" id="PTHR38344">
    <property type="entry name" value="UPF0753 PROTEIN AQ_863"/>
    <property type="match status" value="1"/>
</dbReference>
<dbReference type="Pfam" id="PF10070">
    <property type="entry name" value="DabA"/>
    <property type="match status" value="1"/>
</dbReference>
<gene>
    <name evidence="1" type="primary">dabA</name>
    <name type="ordered locus">BT9727_2937</name>
</gene>
<reference key="1">
    <citation type="journal article" date="2006" name="J. Bacteriol.">
        <title>Pathogenomic sequence analysis of Bacillus cereus and Bacillus thuringiensis isolates closely related to Bacillus anthracis.</title>
        <authorList>
            <person name="Han C.S."/>
            <person name="Xie G."/>
            <person name="Challacombe J.F."/>
            <person name="Altherr M.R."/>
            <person name="Bhotika S.S."/>
            <person name="Bruce D."/>
            <person name="Campbell C.S."/>
            <person name="Campbell M.L."/>
            <person name="Chen J."/>
            <person name="Chertkov O."/>
            <person name="Cleland C."/>
            <person name="Dimitrijevic M."/>
            <person name="Doggett N.A."/>
            <person name="Fawcett J.J."/>
            <person name="Glavina T."/>
            <person name="Goodwin L.A."/>
            <person name="Hill K.K."/>
            <person name="Hitchcock P."/>
            <person name="Jackson P.J."/>
            <person name="Keim P."/>
            <person name="Kewalramani A.R."/>
            <person name="Longmire J."/>
            <person name="Lucas S."/>
            <person name="Malfatti S."/>
            <person name="McMurry K."/>
            <person name="Meincke L.J."/>
            <person name="Misra M."/>
            <person name="Moseman B.L."/>
            <person name="Mundt M."/>
            <person name="Munk A.C."/>
            <person name="Okinaka R.T."/>
            <person name="Parson-Quintana B."/>
            <person name="Reilly L.P."/>
            <person name="Richardson P."/>
            <person name="Robinson D.L."/>
            <person name="Rubin E."/>
            <person name="Saunders E."/>
            <person name="Tapia R."/>
            <person name="Tesmer J.G."/>
            <person name="Thayer N."/>
            <person name="Thompson L.S."/>
            <person name="Tice H."/>
            <person name="Ticknor L.O."/>
            <person name="Wills P.L."/>
            <person name="Brettin T.S."/>
            <person name="Gilna P."/>
        </authorList>
    </citation>
    <scope>NUCLEOTIDE SEQUENCE [LARGE SCALE GENOMIC DNA]</scope>
    <source>
        <strain>97-27</strain>
    </source>
</reference>
<feature type="chain" id="PRO_0000387250" description="Probable inorganic carbon transporter subunit DabA">
    <location>
        <begin position="1"/>
        <end position="874"/>
    </location>
</feature>
<feature type="binding site" evidence="1">
    <location>
        <position position="398"/>
    </location>
    <ligand>
        <name>Zn(2+)</name>
        <dbReference type="ChEBI" id="CHEBI:29105"/>
    </ligand>
</feature>
<feature type="binding site" evidence="1">
    <location>
        <position position="400"/>
    </location>
    <ligand>
        <name>Zn(2+)</name>
        <dbReference type="ChEBI" id="CHEBI:29105"/>
    </ligand>
</feature>
<feature type="binding site" evidence="1">
    <location>
        <position position="580"/>
    </location>
    <ligand>
        <name>Zn(2+)</name>
        <dbReference type="ChEBI" id="CHEBI:29105"/>
    </ligand>
</feature>
<feature type="binding site" evidence="1">
    <location>
        <position position="595"/>
    </location>
    <ligand>
        <name>Zn(2+)</name>
        <dbReference type="ChEBI" id="CHEBI:29105"/>
    </ligand>
</feature>
<evidence type="ECO:0000255" key="1">
    <source>
        <dbReference type="HAMAP-Rule" id="MF_01871"/>
    </source>
</evidence>
<keyword id="KW-1003">Cell membrane</keyword>
<keyword id="KW-0472">Membrane</keyword>
<keyword id="KW-0479">Metal-binding</keyword>
<keyword id="KW-0813">Transport</keyword>
<keyword id="KW-0862">Zinc</keyword>
<accession>Q6HGR6</accession>
<name>DABA_BACHK</name>
<protein>
    <recommendedName>
        <fullName evidence="1">Probable inorganic carbon transporter subunit DabA</fullName>
    </recommendedName>
</protein>
<comment type="function">
    <text evidence="1">Part of an energy-coupled inorganic carbon pump.</text>
</comment>
<comment type="cofactor">
    <cofactor evidence="1">
        <name>Zn(2+)</name>
        <dbReference type="ChEBI" id="CHEBI:29105"/>
    </cofactor>
</comment>
<comment type="subunit">
    <text evidence="1">Forms a complex with DabB.</text>
</comment>
<comment type="subcellular location">
    <subcellularLocation>
        <location evidence="1">Cell membrane</location>
        <topology evidence="1">Peripheral membrane protein</topology>
    </subcellularLocation>
</comment>
<comment type="similarity">
    <text evidence="1">Belongs to the inorganic carbon transporter (TC 9.A.2) DabA family.</text>
</comment>